<protein>
    <recommendedName>
        <fullName evidence="1">Protein GrpE</fullName>
    </recommendedName>
    <alternativeName>
        <fullName evidence="1">HSP-70 cofactor</fullName>
    </alternativeName>
</protein>
<keyword id="KW-0143">Chaperone</keyword>
<keyword id="KW-0963">Cytoplasm</keyword>
<keyword id="KW-0346">Stress response</keyword>
<evidence type="ECO:0000255" key="1">
    <source>
        <dbReference type="HAMAP-Rule" id="MF_01151"/>
    </source>
</evidence>
<evidence type="ECO:0000256" key="2">
    <source>
        <dbReference type="SAM" id="MobiDB-lite"/>
    </source>
</evidence>
<reference key="1">
    <citation type="submission" date="2007-11" db="EMBL/GenBank/DDBJ databases">
        <title>Genome sequencing of phylogenetically and phenotypically diverse Coxiella burnetii isolates.</title>
        <authorList>
            <person name="Seshadri R."/>
            <person name="Samuel J.E."/>
        </authorList>
    </citation>
    <scope>NUCLEOTIDE SEQUENCE [LARGE SCALE GENOMIC DNA]</scope>
    <source>
        <strain>RSA 331 / Henzerling II</strain>
    </source>
</reference>
<accession>A9N8H5</accession>
<gene>
    <name evidence="1" type="primary">grpE</name>
    <name type="ordered locus">COXBURSA331_A1442</name>
</gene>
<feature type="chain" id="PRO_1000085112" description="Protein GrpE">
    <location>
        <begin position="1"/>
        <end position="204"/>
    </location>
</feature>
<feature type="region of interest" description="Disordered" evidence="2">
    <location>
        <begin position="1"/>
        <end position="55"/>
    </location>
</feature>
<feature type="compositionally biased region" description="Basic and acidic residues" evidence="2">
    <location>
        <begin position="7"/>
        <end position="22"/>
    </location>
</feature>
<feature type="compositionally biased region" description="Basic and acidic residues" evidence="2">
    <location>
        <begin position="29"/>
        <end position="55"/>
    </location>
</feature>
<dbReference type="EMBL" id="CP000890">
    <property type="protein sequence ID" value="ABX77641.1"/>
    <property type="molecule type" value="Genomic_DNA"/>
</dbReference>
<dbReference type="SMR" id="A9N8H5"/>
<dbReference type="KEGG" id="cbs:COXBURSA331_A1442"/>
<dbReference type="HOGENOM" id="CLU_057217_6_0_6"/>
<dbReference type="GO" id="GO:0005829">
    <property type="term" value="C:cytosol"/>
    <property type="evidence" value="ECO:0007669"/>
    <property type="project" value="TreeGrafter"/>
</dbReference>
<dbReference type="GO" id="GO:0000774">
    <property type="term" value="F:adenyl-nucleotide exchange factor activity"/>
    <property type="evidence" value="ECO:0007669"/>
    <property type="project" value="InterPro"/>
</dbReference>
<dbReference type="GO" id="GO:0042803">
    <property type="term" value="F:protein homodimerization activity"/>
    <property type="evidence" value="ECO:0007669"/>
    <property type="project" value="InterPro"/>
</dbReference>
<dbReference type="GO" id="GO:0051087">
    <property type="term" value="F:protein-folding chaperone binding"/>
    <property type="evidence" value="ECO:0007669"/>
    <property type="project" value="InterPro"/>
</dbReference>
<dbReference type="GO" id="GO:0051082">
    <property type="term" value="F:unfolded protein binding"/>
    <property type="evidence" value="ECO:0007669"/>
    <property type="project" value="TreeGrafter"/>
</dbReference>
<dbReference type="GO" id="GO:0006457">
    <property type="term" value="P:protein folding"/>
    <property type="evidence" value="ECO:0007669"/>
    <property type="project" value="InterPro"/>
</dbReference>
<dbReference type="CDD" id="cd00446">
    <property type="entry name" value="GrpE"/>
    <property type="match status" value="1"/>
</dbReference>
<dbReference type="FunFam" id="2.30.22.10:FF:000001">
    <property type="entry name" value="Protein GrpE"/>
    <property type="match status" value="1"/>
</dbReference>
<dbReference type="Gene3D" id="3.90.20.20">
    <property type="match status" value="1"/>
</dbReference>
<dbReference type="Gene3D" id="2.30.22.10">
    <property type="entry name" value="Head domain of nucleotide exchange factor GrpE"/>
    <property type="match status" value="1"/>
</dbReference>
<dbReference type="HAMAP" id="MF_01151">
    <property type="entry name" value="GrpE"/>
    <property type="match status" value="1"/>
</dbReference>
<dbReference type="InterPro" id="IPR000740">
    <property type="entry name" value="GrpE"/>
</dbReference>
<dbReference type="InterPro" id="IPR013805">
    <property type="entry name" value="GrpE_coiled_coil"/>
</dbReference>
<dbReference type="InterPro" id="IPR009012">
    <property type="entry name" value="GrpE_head"/>
</dbReference>
<dbReference type="NCBIfam" id="NF010751">
    <property type="entry name" value="PRK14154.1"/>
    <property type="match status" value="1"/>
</dbReference>
<dbReference type="PANTHER" id="PTHR21237">
    <property type="entry name" value="GRPE PROTEIN"/>
    <property type="match status" value="1"/>
</dbReference>
<dbReference type="PANTHER" id="PTHR21237:SF23">
    <property type="entry name" value="GRPE PROTEIN HOMOLOG, MITOCHONDRIAL"/>
    <property type="match status" value="1"/>
</dbReference>
<dbReference type="Pfam" id="PF01025">
    <property type="entry name" value="GrpE"/>
    <property type="match status" value="1"/>
</dbReference>
<dbReference type="PRINTS" id="PR00773">
    <property type="entry name" value="GRPEPROTEIN"/>
</dbReference>
<dbReference type="SUPFAM" id="SSF58014">
    <property type="entry name" value="Coiled-coil domain of nucleotide exchange factor GrpE"/>
    <property type="match status" value="1"/>
</dbReference>
<dbReference type="SUPFAM" id="SSF51064">
    <property type="entry name" value="Head domain of nucleotide exchange factor GrpE"/>
    <property type="match status" value="1"/>
</dbReference>
<dbReference type="PROSITE" id="PS01071">
    <property type="entry name" value="GRPE"/>
    <property type="match status" value="1"/>
</dbReference>
<organism>
    <name type="scientific">Coxiella burnetii (strain RSA 331 / Henzerling II)</name>
    <dbReference type="NCBI Taxonomy" id="360115"/>
    <lineage>
        <taxon>Bacteria</taxon>
        <taxon>Pseudomonadati</taxon>
        <taxon>Pseudomonadota</taxon>
        <taxon>Gammaproteobacteria</taxon>
        <taxon>Legionellales</taxon>
        <taxon>Coxiellaceae</taxon>
        <taxon>Coxiella</taxon>
    </lineage>
</organism>
<proteinExistence type="inferred from homology"/>
<comment type="function">
    <text evidence="1">Participates actively in the response to hyperosmotic and heat shock by preventing the aggregation of stress-denatured proteins, in association with DnaK and GrpE. It is the nucleotide exchange factor for DnaK and may function as a thermosensor. Unfolded proteins bind initially to DnaJ; upon interaction with the DnaJ-bound protein, DnaK hydrolyzes its bound ATP, resulting in the formation of a stable complex. GrpE releases ADP from DnaK; ATP binding to DnaK triggers the release of the substrate protein, thus completing the reaction cycle. Several rounds of ATP-dependent interactions between DnaJ, DnaK and GrpE are required for fully efficient folding.</text>
</comment>
<comment type="subunit">
    <text evidence="1">Homodimer.</text>
</comment>
<comment type="subcellular location">
    <subcellularLocation>
        <location evidence="1">Cytoplasm</location>
    </subcellularLocation>
</comment>
<comment type="similarity">
    <text evidence="1">Belongs to the GrpE family.</text>
</comment>
<name>GRPE_COXBR</name>
<sequence length="204" mass="22952">MSSKNNPESETKAKNKWEKVMEAEEEQEEGRGDGSQEMEPHREGLEFPSREKLEGQLTRMERKVDEYKTQYLRAQAEMDNLRKRIEREKADIIKFGSKQLITDLLPVADSLIHGLESPASEDPQVKSMRDGMSLTLDLLHNTLAKHGVQVINPNPGDPFDPALHEAMSVQAVPDAKPDTIIQVLQKGYQLNGRVLRAARVIVAG</sequence>